<organism>
    <name type="scientific">Metapseudomonas furukawaii</name>
    <name type="common">Pseudomonas furukawaii</name>
    <dbReference type="NCBI Taxonomy" id="1149133"/>
    <lineage>
        <taxon>Bacteria</taxon>
        <taxon>Pseudomonadati</taxon>
        <taxon>Pseudomonadota</taxon>
        <taxon>Gammaproteobacteria</taxon>
        <taxon>Pseudomonadales</taxon>
        <taxon>Pseudomonadaceae</taxon>
        <taxon>Metapseudomonas</taxon>
    </lineage>
</organism>
<protein>
    <recommendedName>
        <fullName>Biphenyl dioxygenase subunit alpha</fullName>
        <ecNumber>1.14.12.18</ecNumber>
    </recommendedName>
    <alternativeName>
        <fullName>Biphenyl 2,3-dioxygenase</fullName>
    </alternativeName>
</protein>
<keyword id="KW-0001">2Fe-2S</keyword>
<keyword id="KW-0058">Aromatic hydrocarbons catabolism</keyword>
<keyword id="KW-0223">Dioxygenase</keyword>
<keyword id="KW-0408">Iron</keyword>
<keyword id="KW-0411">Iron-sulfur</keyword>
<keyword id="KW-0479">Metal-binding</keyword>
<keyword id="KW-0520">NAD</keyword>
<keyword id="KW-0560">Oxidoreductase</keyword>
<feature type="chain" id="PRO_0000085048" description="Biphenyl dioxygenase subunit alpha">
    <location>
        <begin position="1"/>
        <end position="458"/>
    </location>
</feature>
<feature type="domain" description="Rieske" evidence="2">
    <location>
        <begin position="58"/>
        <end position="156"/>
    </location>
</feature>
<feature type="binding site" evidence="2">
    <location>
        <position position="100"/>
    </location>
    <ligand>
        <name>[2Fe-2S] cluster</name>
        <dbReference type="ChEBI" id="CHEBI:190135"/>
    </ligand>
</feature>
<feature type="binding site" evidence="2">
    <location>
        <position position="102"/>
    </location>
    <ligand>
        <name>[2Fe-2S] cluster</name>
        <dbReference type="ChEBI" id="CHEBI:190135"/>
    </ligand>
</feature>
<feature type="binding site" evidence="2">
    <location>
        <position position="120"/>
    </location>
    <ligand>
        <name>[2Fe-2S] cluster</name>
        <dbReference type="ChEBI" id="CHEBI:190135"/>
    </ligand>
</feature>
<feature type="binding site" evidence="2">
    <location>
        <position position="123"/>
    </location>
    <ligand>
        <name>[2Fe-2S] cluster</name>
        <dbReference type="ChEBI" id="CHEBI:190135"/>
    </ligand>
</feature>
<feature type="binding site" evidence="1">
    <location>
        <position position="233"/>
    </location>
    <ligand>
        <name>Fe cation</name>
        <dbReference type="ChEBI" id="CHEBI:24875"/>
    </ligand>
</feature>
<feature type="binding site" evidence="1">
    <location>
        <position position="239"/>
    </location>
    <ligand>
        <name>Fe cation</name>
        <dbReference type="ChEBI" id="CHEBI:24875"/>
    </ligand>
</feature>
<dbReference type="EC" id="1.14.12.18"/>
<dbReference type="EMBL" id="M83673">
    <property type="protein sequence ID" value="AAA25743.1"/>
    <property type="molecule type" value="Genomic_DNA"/>
</dbReference>
<dbReference type="PIR" id="A42409">
    <property type="entry name" value="A42409"/>
</dbReference>
<dbReference type="RefSeq" id="WP_036992472.1">
    <property type="nucleotide sequence ID" value="NZ_AJMR01000119.1"/>
</dbReference>
<dbReference type="SMR" id="Q52028"/>
<dbReference type="STRING" id="1149133.ppKF707_3406"/>
<dbReference type="OrthoDB" id="9769355at2"/>
<dbReference type="UniPathway" id="UPA00155">
    <property type="reaction ID" value="UER00250"/>
</dbReference>
<dbReference type="GO" id="GO:0051537">
    <property type="term" value="F:2 iron, 2 sulfur cluster binding"/>
    <property type="evidence" value="ECO:0007669"/>
    <property type="project" value="UniProtKB-KW"/>
</dbReference>
<dbReference type="GO" id="GO:0018687">
    <property type="term" value="F:biphenyl 2,3-dioxygenase activity"/>
    <property type="evidence" value="ECO:0007669"/>
    <property type="project" value="UniProtKB-EC"/>
</dbReference>
<dbReference type="GO" id="GO:0005506">
    <property type="term" value="F:iron ion binding"/>
    <property type="evidence" value="ECO:0007669"/>
    <property type="project" value="InterPro"/>
</dbReference>
<dbReference type="GO" id="GO:0009056">
    <property type="term" value="P:catabolic process"/>
    <property type="evidence" value="ECO:0007669"/>
    <property type="project" value="UniProtKB-KW"/>
</dbReference>
<dbReference type="CDD" id="cd08881">
    <property type="entry name" value="RHO_alpha_C_NDO-like"/>
    <property type="match status" value="1"/>
</dbReference>
<dbReference type="Gene3D" id="3.90.380.10">
    <property type="entry name" value="Naphthalene 1,2-dioxygenase Alpha Subunit, Chain A, domain 1"/>
    <property type="match status" value="1"/>
</dbReference>
<dbReference type="Gene3D" id="2.102.10.10">
    <property type="entry name" value="Rieske [2Fe-2S] iron-sulphur domain"/>
    <property type="match status" value="1"/>
</dbReference>
<dbReference type="InterPro" id="IPR043266">
    <property type="entry name" value="RHO_NdoB-like_C"/>
</dbReference>
<dbReference type="InterPro" id="IPR017941">
    <property type="entry name" value="Rieske_2Fe-2S"/>
</dbReference>
<dbReference type="InterPro" id="IPR036922">
    <property type="entry name" value="Rieske_2Fe-2S_sf"/>
</dbReference>
<dbReference type="InterPro" id="IPR015881">
    <property type="entry name" value="Ring-hydroxy_dOase_2Fe2S_BS"/>
</dbReference>
<dbReference type="InterPro" id="IPR015879">
    <property type="entry name" value="Ring_hydroxy_dOase_asu_C_dom"/>
</dbReference>
<dbReference type="InterPro" id="IPR001663">
    <property type="entry name" value="Rng_hydr_dOase-A"/>
</dbReference>
<dbReference type="PANTHER" id="PTHR43756:SF1">
    <property type="entry name" value="3-PHENYLPROPIONATE_CINNAMIC ACID DIOXYGENASE SUBUNIT ALPHA"/>
    <property type="match status" value="1"/>
</dbReference>
<dbReference type="PANTHER" id="PTHR43756">
    <property type="entry name" value="CHOLINE MONOOXYGENASE, CHLOROPLASTIC"/>
    <property type="match status" value="1"/>
</dbReference>
<dbReference type="Pfam" id="PF00355">
    <property type="entry name" value="Rieske"/>
    <property type="match status" value="1"/>
</dbReference>
<dbReference type="Pfam" id="PF00848">
    <property type="entry name" value="Ring_hydroxyl_A"/>
    <property type="match status" value="1"/>
</dbReference>
<dbReference type="PRINTS" id="PR00090">
    <property type="entry name" value="RNGDIOXGNASE"/>
</dbReference>
<dbReference type="SUPFAM" id="SSF55961">
    <property type="entry name" value="Bet v1-like"/>
    <property type="match status" value="1"/>
</dbReference>
<dbReference type="SUPFAM" id="SSF50022">
    <property type="entry name" value="ISP domain"/>
    <property type="match status" value="1"/>
</dbReference>
<dbReference type="PROSITE" id="PS51296">
    <property type="entry name" value="RIESKE"/>
    <property type="match status" value="1"/>
</dbReference>
<dbReference type="PROSITE" id="PS00570">
    <property type="entry name" value="RING_HYDROXYL_ALPHA"/>
    <property type="match status" value="1"/>
</dbReference>
<comment type="catalytic activity">
    <reaction>
        <text>biphenyl + NADH + O2 + H(+) = (2R,3S)-3-phenylcyclohexa-3,5-diene-1,2-diol + NAD(+)</text>
        <dbReference type="Rhea" id="RHEA:18165"/>
        <dbReference type="ChEBI" id="CHEBI:15378"/>
        <dbReference type="ChEBI" id="CHEBI:15379"/>
        <dbReference type="ChEBI" id="CHEBI:17097"/>
        <dbReference type="ChEBI" id="CHEBI:32922"/>
        <dbReference type="ChEBI" id="CHEBI:57540"/>
        <dbReference type="ChEBI" id="CHEBI:57945"/>
        <dbReference type="EC" id="1.14.12.18"/>
    </reaction>
</comment>
<comment type="cofactor">
    <cofactor evidence="2">
        <name>[2Fe-2S] cluster</name>
        <dbReference type="ChEBI" id="CHEBI:190135"/>
    </cofactor>
    <text evidence="2">Binds 1 [2Fe-2S] cluster per subunit.</text>
</comment>
<comment type="cofactor">
    <cofactor evidence="1">
        <name>Fe cation</name>
        <dbReference type="ChEBI" id="CHEBI:24875"/>
    </cofactor>
    <text evidence="1">Binds 1 Fe cation per subunit.</text>
</comment>
<comment type="pathway">
    <text>Xenobiotic degradation; biphenyl degradation; 2-hydroxy-2,4-pentadienoate and benzoate from biphenyl: step 1/4.</text>
</comment>
<comment type="subunit">
    <text evidence="1">Heterohexamer consisting of three BphA subunits and three BphE subunits. A ferredoxin (BphF) and a ferredoxin reductase (BphG) must be present to obtain activity (By similarity).</text>
</comment>
<comment type="similarity">
    <text evidence="3">Belongs to the bacterial ring-hydroxylating dioxygenase alpha subunit family.</text>
</comment>
<gene>
    <name type="primary">bphA</name>
    <name type="synonym">bphA1</name>
</gene>
<sequence>MSSSIKEVQGAPVKWVTNWTPEAIRGLVDQEKGLLDPRIYADQSLYELELERVFGRSWLLLGHESHVPETGDFLATYMGEDPVVMVRQKDKSIKVFLNQCRHRGMRICRSDAGNAKAFTCSYHGWAYDIAGKLVNVPFEKEAFCDKKEGDCGFDKAEWGPLQARVATYKGLVFANWDVQAPDLETYLGDARPYMDVMLDRTPAGTVAIGGMQKWVIPCNWKFAAEQFCSDMYHAGTMSHLSGILAGMPPEMDLSHAQVPTKGNQFRAGWGGHGSGWFVDEPGMLMAVMGPKVTQYWTEGPAADLAEQRLGHTMPVRRMFGQHMSVFPTCSFLPAINTIRTWHPRGPNEIEVWAFTLVDADAPAEIKEEYRRHNIRTFSAGGVFEQDDGENWVEIQKGLRGYKAKSQPLNAQMGLGRSQTGHPDFPGNVGYVYAEEAARGMYHHWMRMMSEPSWATLKP</sequence>
<proteinExistence type="inferred from homology"/>
<name>BPHA_METFU</name>
<accession>Q52028</accession>
<evidence type="ECO:0000250" key="1"/>
<evidence type="ECO:0000255" key="2">
    <source>
        <dbReference type="PROSITE-ProRule" id="PRU00628"/>
    </source>
</evidence>
<evidence type="ECO:0000305" key="3"/>
<reference key="1">
    <citation type="journal article" date="1992" name="J. Biol. Chem.">
        <title>Analysis of bph operon from the polychlorinated biphenyl-degrading strain of Pseudomonas pseudoalcaligenes KF707.</title>
        <authorList>
            <person name="Taira K."/>
            <person name="Hirose J."/>
            <person name="Hayashida S."/>
            <person name="Furukawa K."/>
        </authorList>
    </citation>
    <scope>NUCLEOTIDE SEQUENCE [GENOMIC DNA]</scope>
    <source>
        <strain>DSM 10086 / NBRC 110670 / KF707</strain>
    </source>
</reference>